<proteinExistence type="evidence at protein level"/>
<sequence length="14" mass="1594">IRCTGSKECYSPSY</sequence>
<feature type="peptide" id="PRO_0000398132" description="Potassium channel toxin alpha-KTx 6 OcyKTx4" evidence="7">
    <location>
        <begin position="1"/>
        <end position="14" status="greater than"/>
    </location>
</feature>
<feature type="disulfide bond" evidence="2">
    <location>
        <begin position="3"/>
        <end status="unknown"/>
    </location>
</feature>
<feature type="disulfide bond" evidence="2">
    <location>
        <begin position="9"/>
        <end status="unknown"/>
    </location>
</feature>
<feature type="non-terminal residue" evidence="5">
    <location>
        <position position="14"/>
    </location>
</feature>
<name>KAX6X_OPICY</name>
<evidence type="ECO:0000250" key="1">
    <source>
        <dbReference type="UniProtKB" id="P58498"/>
    </source>
</evidence>
<evidence type="ECO:0000250" key="2">
    <source>
        <dbReference type="UniProtKB" id="Q10726"/>
    </source>
</evidence>
<evidence type="ECO:0000255" key="3"/>
<evidence type="ECO:0000269" key="4">
    <source>
    </source>
</evidence>
<evidence type="ECO:0000303" key="5">
    <source>
    </source>
</evidence>
<evidence type="ECO:0000305" key="6"/>
<evidence type="ECO:0000305" key="7">
    <source>
    </source>
</evidence>
<accession>P86105</accession>
<comment type="function">
    <text evidence="1">Blocks voltage-gated potassium channels.</text>
</comment>
<comment type="subcellular location">
    <subcellularLocation>
        <location evidence="4">Secreted</location>
    </subcellularLocation>
</comment>
<comment type="tissue specificity">
    <text evidence="4">Expressed by the venom gland.</text>
</comment>
<comment type="domain">
    <text evidence="6">Has the structural arrangement of an alpha-helix connected to antiparallel beta-sheets by disulfide bonds (CS-alpha/beta).</text>
</comment>
<comment type="mass spectrometry" mass="3773.0" method="MALDI" evidence="4"/>
<comment type="miscellaneous">
    <text evidence="7">This peptide elutes at 19.98 minutes.</text>
</comment>
<comment type="similarity">
    <text evidence="3">Belongs to the short scorpion toxin superfamily. Potassium channel inhibitor family. Alpha-KTx 06 subfamily.</text>
</comment>
<comment type="caution">
    <text evidence="6">Ser-13 may be erroneous, since homologs contain a Cys at this position.</text>
</comment>
<reference key="1">
    <citation type="journal article" date="2008" name="Toxicon">
        <title>Mass spectrometry analysis, amino acid sequence and biological activity of venom components from the Brazilian scorpion Opisthacanthus cayaporum.</title>
        <authorList>
            <person name="Schwartz E.F."/>
            <person name="Camargos T.S."/>
            <person name="Zamudio F.Z."/>
            <person name="Silva L.P."/>
            <person name="Bloch C. Jr."/>
            <person name="Caixeta F."/>
            <person name="Schwartz C.A."/>
            <person name="Possani L.D."/>
        </authorList>
    </citation>
    <scope>PROTEIN SEQUENCE</scope>
    <scope>SUBCELLULAR LOCATION</scope>
    <scope>TISSUE SPECIFICITY</scope>
    <scope>MASS SPECTROMETRY</scope>
    <source>
        <tissue>Venom</tissue>
    </source>
</reference>
<keyword id="KW-0903">Direct protein sequencing</keyword>
<keyword id="KW-1015">Disulfide bond</keyword>
<keyword id="KW-0872">Ion channel impairing toxin</keyword>
<keyword id="KW-0632">Potassium channel impairing toxin</keyword>
<keyword id="KW-0964">Secreted</keyword>
<keyword id="KW-0800">Toxin</keyword>
<dbReference type="GO" id="GO:0005576">
    <property type="term" value="C:extracellular region"/>
    <property type="evidence" value="ECO:0007669"/>
    <property type="project" value="UniProtKB-SubCell"/>
</dbReference>
<dbReference type="GO" id="GO:0015459">
    <property type="term" value="F:potassium channel regulator activity"/>
    <property type="evidence" value="ECO:0007669"/>
    <property type="project" value="UniProtKB-KW"/>
</dbReference>
<dbReference type="GO" id="GO:0090729">
    <property type="term" value="F:toxin activity"/>
    <property type="evidence" value="ECO:0007669"/>
    <property type="project" value="UniProtKB-KW"/>
</dbReference>
<protein>
    <recommendedName>
        <fullName>Potassium channel toxin alpha-KTx 6 OcyKTx4</fullName>
    </recommendedName>
</protein>
<organism>
    <name type="scientific">Opisthacanthus cayaporum</name>
    <name type="common">South American scorpion</name>
    <dbReference type="NCBI Taxonomy" id="573324"/>
    <lineage>
        <taxon>Eukaryota</taxon>
        <taxon>Metazoa</taxon>
        <taxon>Ecdysozoa</taxon>
        <taxon>Arthropoda</taxon>
        <taxon>Chelicerata</taxon>
        <taxon>Arachnida</taxon>
        <taxon>Scorpiones</taxon>
        <taxon>Iurida</taxon>
        <taxon>Scorpionoidea</taxon>
        <taxon>Hemiscorpiidae</taxon>
        <taxon>Opisthacanthus</taxon>
    </lineage>
</organism>